<gene>
    <name type="ordered locus">Os03g0206600</name>
    <name type="ordered locus">LOC_Os03g10870</name>
    <name type="ORF">OsJ_09845</name>
    <name type="ORF">OSJNBa0014O06.2</name>
</gene>
<protein>
    <recommendedName>
        <fullName>CASP-like protein 5A1</fullName>
        <shortName>OsCASPL5A1</shortName>
    </recommendedName>
</protein>
<keyword id="KW-0025">Alternative splicing</keyword>
<keyword id="KW-1003">Cell membrane</keyword>
<keyword id="KW-0472">Membrane</keyword>
<keyword id="KW-1185">Reference proteome</keyword>
<keyword id="KW-0812">Transmembrane</keyword>
<keyword id="KW-1133">Transmembrane helix</keyword>
<feature type="chain" id="PRO_0000418697" description="CASP-like protein 5A1">
    <location>
        <begin position="1"/>
        <end position="178"/>
    </location>
</feature>
<feature type="topological domain" description="Cytoplasmic" evidence="2">
    <location>
        <begin position="1"/>
        <end position="37"/>
    </location>
</feature>
<feature type="transmembrane region" description="Helical" evidence="2">
    <location>
        <begin position="38"/>
        <end position="58"/>
    </location>
</feature>
<feature type="topological domain" description="Extracellular" evidence="2">
    <location>
        <begin position="59"/>
        <end position="69"/>
    </location>
</feature>
<feature type="transmembrane region" description="Helical" evidence="2">
    <location>
        <begin position="70"/>
        <end position="90"/>
    </location>
</feature>
<feature type="topological domain" description="Cytoplasmic" evidence="2">
    <location>
        <begin position="91"/>
        <end position="105"/>
    </location>
</feature>
<feature type="transmembrane region" description="Helical" evidence="2">
    <location>
        <begin position="106"/>
        <end position="126"/>
    </location>
</feature>
<feature type="topological domain" description="Extracellular" evidence="2">
    <location>
        <begin position="127"/>
        <end position="152"/>
    </location>
</feature>
<feature type="transmembrane region" description="Helical" evidence="2">
    <location>
        <begin position="153"/>
        <end position="173"/>
    </location>
</feature>
<feature type="topological domain" description="Cytoplasmic" evidence="2">
    <location>
        <begin position="174"/>
        <end position="178"/>
    </location>
</feature>
<feature type="region of interest" description="Disordered" evidence="3">
    <location>
        <begin position="1"/>
        <end position="25"/>
    </location>
</feature>
<feature type="compositionally biased region" description="Low complexity" evidence="3">
    <location>
        <begin position="1"/>
        <end position="11"/>
    </location>
</feature>
<feature type="splice variant" id="VSP_044077" description="In isoform 2." evidence="4">
    <original>FALSPSFLLNFWSMASG</original>
    <variation>GWPVLQVFNVELSKSLLSKPQHHYITRVVPNFHGTFQLKVVLKEPLKLVENLLSSADILVCNTHPWLLAKSSALTRANCGAVIYHTDPSVDGTLLFSH</variation>
    <location>
        <begin position="162"/>
        <end position="178"/>
    </location>
</feature>
<comment type="subunit">
    <text evidence="1">Homodimer and heterodimers.</text>
</comment>
<comment type="subcellular location">
    <subcellularLocation>
        <location evidence="1">Cell membrane</location>
        <topology evidence="1">Multi-pass membrane protein</topology>
    </subcellularLocation>
</comment>
<comment type="alternative products">
    <event type="alternative splicing"/>
    <isoform>
        <id>Q10Q78-1</id>
        <name>1</name>
        <sequence type="displayed"/>
    </isoform>
    <isoform>
        <id>Q10Q78-2</id>
        <name>2</name>
        <sequence type="described" ref="VSP_044077"/>
    </isoform>
</comment>
<comment type="similarity">
    <text evidence="4">Belongs to the Casparian strip membrane proteins (CASP) family.</text>
</comment>
<comment type="sequence caution" evidence="4">
    <conflict type="erroneous initiation">
        <sequence resource="EMBL-CDS" id="AAN77295"/>
    </conflict>
    <text>Truncated N-terminus.</text>
</comment>
<proteinExistence type="evidence at transcript level"/>
<organism>
    <name type="scientific">Oryza sativa subsp. japonica</name>
    <name type="common">Rice</name>
    <dbReference type="NCBI Taxonomy" id="39947"/>
    <lineage>
        <taxon>Eukaryota</taxon>
        <taxon>Viridiplantae</taxon>
        <taxon>Streptophyta</taxon>
        <taxon>Embryophyta</taxon>
        <taxon>Tracheophyta</taxon>
        <taxon>Spermatophyta</taxon>
        <taxon>Magnoliopsida</taxon>
        <taxon>Liliopsida</taxon>
        <taxon>Poales</taxon>
        <taxon>Poaceae</taxon>
        <taxon>BOP clade</taxon>
        <taxon>Oryzoideae</taxon>
        <taxon>Oryzeae</taxon>
        <taxon>Oryzinae</taxon>
        <taxon>Oryza</taxon>
        <taxon>Oryza sativa</taxon>
    </lineage>
</organism>
<name>CSPLV_ORYSJ</name>
<reference key="1">
    <citation type="journal article" date="2005" name="Genome Res.">
        <title>Sequence, annotation, and analysis of synteny between rice chromosome 3 and diverged grass species.</title>
        <authorList>
            <consortium name="The rice chromosome 3 sequencing consortium"/>
            <person name="Buell C.R."/>
            <person name="Yuan Q."/>
            <person name="Ouyang S."/>
            <person name="Liu J."/>
            <person name="Zhu W."/>
            <person name="Wang A."/>
            <person name="Maiti R."/>
            <person name="Haas B."/>
            <person name="Wortman J."/>
            <person name="Pertea M."/>
            <person name="Jones K.M."/>
            <person name="Kim M."/>
            <person name="Overton L."/>
            <person name="Tsitrin T."/>
            <person name="Fadrosh D."/>
            <person name="Bera J."/>
            <person name="Weaver B."/>
            <person name="Jin S."/>
            <person name="Johri S."/>
            <person name="Reardon M."/>
            <person name="Webb K."/>
            <person name="Hill J."/>
            <person name="Moffat K."/>
            <person name="Tallon L."/>
            <person name="Van Aken S."/>
            <person name="Lewis M."/>
            <person name="Utterback T."/>
            <person name="Feldblyum T."/>
            <person name="Zismann V."/>
            <person name="Iobst S."/>
            <person name="Hsiao J."/>
            <person name="de Vazeille A.R."/>
            <person name="Salzberg S.L."/>
            <person name="White O."/>
            <person name="Fraser C.M."/>
            <person name="Yu Y."/>
            <person name="Kim H."/>
            <person name="Rambo T."/>
            <person name="Currie J."/>
            <person name="Collura K."/>
            <person name="Kernodle-Thompson S."/>
            <person name="Wei F."/>
            <person name="Kudrna K."/>
            <person name="Ammiraju J.S.S."/>
            <person name="Luo M."/>
            <person name="Goicoechea J.L."/>
            <person name="Wing R.A."/>
            <person name="Henry D."/>
            <person name="Oates R."/>
            <person name="Palmer M."/>
            <person name="Pries G."/>
            <person name="Saski C."/>
            <person name="Simmons J."/>
            <person name="Soderlund C."/>
            <person name="Nelson W."/>
            <person name="de la Bastide M."/>
            <person name="Spiegel L."/>
            <person name="Nascimento L."/>
            <person name="Huang E."/>
            <person name="Preston R."/>
            <person name="Zutavern T."/>
            <person name="Palmer L."/>
            <person name="O'Shaughnessy A."/>
            <person name="Dike S."/>
            <person name="McCombie W.R."/>
            <person name="Minx P."/>
            <person name="Cordum H."/>
            <person name="Wilson R."/>
            <person name="Jin W."/>
            <person name="Lee H.R."/>
            <person name="Jiang J."/>
            <person name="Jackson S."/>
        </authorList>
    </citation>
    <scope>NUCLEOTIDE SEQUENCE [LARGE SCALE GENOMIC DNA]</scope>
    <source>
        <strain>cv. Nipponbare</strain>
    </source>
</reference>
<reference key="2">
    <citation type="journal article" date="2005" name="Nature">
        <title>The map-based sequence of the rice genome.</title>
        <authorList>
            <consortium name="International rice genome sequencing project (IRGSP)"/>
        </authorList>
    </citation>
    <scope>NUCLEOTIDE SEQUENCE [LARGE SCALE GENOMIC DNA]</scope>
    <source>
        <strain>cv. Nipponbare</strain>
    </source>
</reference>
<reference key="3">
    <citation type="journal article" date="2008" name="Nucleic Acids Res.">
        <title>The rice annotation project database (RAP-DB): 2008 update.</title>
        <authorList>
            <consortium name="The rice annotation project (RAP)"/>
        </authorList>
    </citation>
    <scope>GENOME REANNOTATION</scope>
    <source>
        <strain>cv. Nipponbare</strain>
    </source>
</reference>
<reference key="4">
    <citation type="journal article" date="2013" name="Rice">
        <title>Improvement of the Oryza sativa Nipponbare reference genome using next generation sequence and optical map data.</title>
        <authorList>
            <person name="Kawahara Y."/>
            <person name="de la Bastide M."/>
            <person name="Hamilton J.P."/>
            <person name="Kanamori H."/>
            <person name="McCombie W.R."/>
            <person name="Ouyang S."/>
            <person name="Schwartz D.C."/>
            <person name="Tanaka T."/>
            <person name="Wu J."/>
            <person name="Zhou S."/>
            <person name="Childs K.L."/>
            <person name="Davidson R.M."/>
            <person name="Lin H."/>
            <person name="Quesada-Ocampo L."/>
            <person name="Vaillancourt B."/>
            <person name="Sakai H."/>
            <person name="Lee S.S."/>
            <person name="Kim J."/>
            <person name="Numa H."/>
            <person name="Itoh T."/>
            <person name="Buell C.R."/>
            <person name="Matsumoto T."/>
        </authorList>
    </citation>
    <scope>GENOME REANNOTATION</scope>
    <source>
        <strain>cv. Nipponbare</strain>
    </source>
</reference>
<reference key="5">
    <citation type="journal article" date="2005" name="PLoS Biol.">
        <title>The genomes of Oryza sativa: a history of duplications.</title>
        <authorList>
            <person name="Yu J."/>
            <person name="Wang J."/>
            <person name="Lin W."/>
            <person name="Li S."/>
            <person name="Li H."/>
            <person name="Zhou J."/>
            <person name="Ni P."/>
            <person name="Dong W."/>
            <person name="Hu S."/>
            <person name="Zeng C."/>
            <person name="Zhang J."/>
            <person name="Zhang Y."/>
            <person name="Li R."/>
            <person name="Xu Z."/>
            <person name="Li S."/>
            <person name="Li X."/>
            <person name="Zheng H."/>
            <person name="Cong L."/>
            <person name="Lin L."/>
            <person name="Yin J."/>
            <person name="Geng J."/>
            <person name="Li G."/>
            <person name="Shi J."/>
            <person name="Liu J."/>
            <person name="Lv H."/>
            <person name="Li J."/>
            <person name="Wang J."/>
            <person name="Deng Y."/>
            <person name="Ran L."/>
            <person name="Shi X."/>
            <person name="Wang X."/>
            <person name="Wu Q."/>
            <person name="Li C."/>
            <person name="Ren X."/>
            <person name="Wang J."/>
            <person name="Wang X."/>
            <person name="Li D."/>
            <person name="Liu D."/>
            <person name="Zhang X."/>
            <person name="Ji Z."/>
            <person name="Zhao W."/>
            <person name="Sun Y."/>
            <person name="Zhang Z."/>
            <person name="Bao J."/>
            <person name="Han Y."/>
            <person name="Dong L."/>
            <person name="Ji J."/>
            <person name="Chen P."/>
            <person name="Wu S."/>
            <person name="Liu J."/>
            <person name="Xiao Y."/>
            <person name="Bu D."/>
            <person name="Tan J."/>
            <person name="Yang L."/>
            <person name="Ye C."/>
            <person name="Zhang J."/>
            <person name="Xu J."/>
            <person name="Zhou Y."/>
            <person name="Yu Y."/>
            <person name="Zhang B."/>
            <person name="Zhuang S."/>
            <person name="Wei H."/>
            <person name="Liu B."/>
            <person name="Lei M."/>
            <person name="Yu H."/>
            <person name="Li Y."/>
            <person name="Xu H."/>
            <person name="Wei S."/>
            <person name="He X."/>
            <person name="Fang L."/>
            <person name="Zhang Z."/>
            <person name="Zhang Y."/>
            <person name="Huang X."/>
            <person name="Su Z."/>
            <person name="Tong W."/>
            <person name="Li J."/>
            <person name="Tong Z."/>
            <person name="Li S."/>
            <person name="Ye J."/>
            <person name="Wang L."/>
            <person name="Fang L."/>
            <person name="Lei T."/>
            <person name="Chen C.-S."/>
            <person name="Chen H.-C."/>
            <person name="Xu Z."/>
            <person name="Li H."/>
            <person name="Huang H."/>
            <person name="Zhang F."/>
            <person name="Xu H."/>
            <person name="Li N."/>
            <person name="Zhao C."/>
            <person name="Li S."/>
            <person name="Dong L."/>
            <person name="Huang Y."/>
            <person name="Li L."/>
            <person name="Xi Y."/>
            <person name="Qi Q."/>
            <person name="Li W."/>
            <person name="Zhang B."/>
            <person name="Hu W."/>
            <person name="Zhang Y."/>
            <person name="Tian X."/>
            <person name="Jiao Y."/>
            <person name="Liang X."/>
            <person name="Jin J."/>
            <person name="Gao L."/>
            <person name="Zheng W."/>
            <person name="Hao B."/>
            <person name="Liu S.-M."/>
            <person name="Wang W."/>
            <person name="Yuan L."/>
            <person name="Cao M."/>
            <person name="McDermott J."/>
            <person name="Samudrala R."/>
            <person name="Wang J."/>
            <person name="Wong G.K.-S."/>
            <person name="Yang H."/>
        </authorList>
    </citation>
    <scope>NUCLEOTIDE SEQUENCE [LARGE SCALE GENOMIC DNA]</scope>
    <source>
        <strain>cv. Nipponbare</strain>
    </source>
</reference>
<reference key="6">
    <citation type="journal article" date="2003" name="Science">
        <title>Collection, mapping, and annotation of over 28,000 cDNA clones from japonica rice.</title>
        <authorList>
            <consortium name="The rice full-length cDNA consortium"/>
        </authorList>
    </citation>
    <scope>NUCLEOTIDE SEQUENCE [LARGE SCALE MRNA] (ISOFORM 1)</scope>
    <source>
        <strain>cv. Nipponbare</strain>
    </source>
</reference>
<reference key="7">
    <citation type="journal article" date="2014" name="Plant Physiol.">
        <title>Functional and evolutionary analysis of the CASPARIAN STRIP MEMBRANE DOMAIN PROTEIN family.</title>
        <authorList>
            <person name="Roppolo D."/>
            <person name="Boeckmann B."/>
            <person name="Pfister A."/>
            <person name="Boutet E."/>
            <person name="Rubio M.C."/>
            <person name="Denervaud-Tendon V."/>
            <person name="Vermeer J.E."/>
            <person name="Gheyselinck J."/>
            <person name="Xenarios I."/>
            <person name="Geldner N."/>
        </authorList>
    </citation>
    <scope>GENE FAMILY</scope>
    <scope>NOMENCLATURE</scope>
</reference>
<accession>Q10Q78</accession>
<accession>A0A0P0VUE0</accession>
<accession>B9F631</accession>
<accession>Q8H070</accession>
<sequence length="178" mass="18754">MFASRPAVHPVEAPPPPDPAEQPRGVLMKDLPGMPGTAGGLGLRLAQFAFAAVALAVMASTNDFPSVTSFCFLVAAAILQCLWSFSLAIVDIYALLVKRCLRNRRAVCLFAIGDGITAALTFSAACASSGITVLIDNDLDLCSENHCASFESATAMAFLSWFALSPSFLLNFWSMASG</sequence>
<evidence type="ECO:0000250" key="1"/>
<evidence type="ECO:0000255" key="2"/>
<evidence type="ECO:0000256" key="3">
    <source>
        <dbReference type="SAM" id="MobiDB-lite"/>
    </source>
</evidence>
<evidence type="ECO:0000305" key="4"/>
<dbReference type="EMBL" id="AC105928">
    <property type="protein sequence ID" value="AAN77295.1"/>
    <property type="status" value="ALT_INIT"/>
    <property type="molecule type" value="Genomic_DNA"/>
</dbReference>
<dbReference type="EMBL" id="DP000009">
    <property type="protein sequence ID" value="ABF94553.1"/>
    <property type="molecule type" value="Genomic_DNA"/>
</dbReference>
<dbReference type="EMBL" id="AP008209">
    <property type="protein sequence ID" value="BAF11234.1"/>
    <property type="molecule type" value="Genomic_DNA"/>
</dbReference>
<dbReference type="EMBL" id="AP014959">
    <property type="protein sequence ID" value="BAS82869.1"/>
    <property type="molecule type" value="Genomic_DNA"/>
</dbReference>
<dbReference type="EMBL" id="CM000140">
    <property type="protein sequence ID" value="EEE58547.1"/>
    <property type="molecule type" value="Genomic_DNA"/>
</dbReference>
<dbReference type="EMBL" id="AK058618">
    <property type="protein sequence ID" value="BAG86755.1"/>
    <property type="molecule type" value="mRNA"/>
</dbReference>
<dbReference type="RefSeq" id="XP_015633071.1">
    <property type="nucleotide sequence ID" value="XM_015777585.1"/>
</dbReference>
<dbReference type="FunCoup" id="Q10Q78">
    <property type="interactions" value="2112"/>
</dbReference>
<dbReference type="STRING" id="39947.Q10Q78"/>
<dbReference type="PaxDb" id="39947-Q10Q78"/>
<dbReference type="EnsemblPlants" id="Os03t0206600-01">
    <molecule id="Q10Q78-1"/>
    <property type="protein sequence ID" value="Os03t0206600-01"/>
    <property type="gene ID" value="Os03g0206600"/>
</dbReference>
<dbReference type="Gramene" id="Os03t0206600-01">
    <molecule id="Q10Q78-1"/>
    <property type="protein sequence ID" value="Os03t0206600-01"/>
    <property type="gene ID" value="Os03g0206600"/>
</dbReference>
<dbReference type="KEGG" id="dosa:Os03g0206600"/>
<dbReference type="eggNOG" id="ENOG502QTTS">
    <property type="taxonomic scope" value="Eukaryota"/>
</dbReference>
<dbReference type="HOGENOM" id="CLU_103961_0_0_1"/>
<dbReference type="InParanoid" id="Q10Q78"/>
<dbReference type="OMA" id="MEMASHP"/>
<dbReference type="OrthoDB" id="828022at2759"/>
<dbReference type="Proteomes" id="UP000000763">
    <property type="component" value="Chromosome 3"/>
</dbReference>
<dbReference type="Proteomes" id="UP000007752">
    <property type="component" value="Chromosome 3"/>
</dbReference>
<dbReference type="Proteomes" id="UP000059680">
    <property type="component" value="Chromosome 3"/>
</dbReference>
<dbReference type="GO" id="GO:0016020">
    <property type="term" value="C:membrane"/>
    <property type="evidence" value="ECO:0000318"/>
    <property type="project" value="GO_Central"/>
</dbReference>
<dbReference type="GO" id="GO:0005886">
    <property type="term" value="C:plasma membrane"/>
    <property type="evidence" value="ECO:0007669"/>
    <property type="project" value="UniProtKB-SubCell"/>
</dbReference>
<dbReference type="InterPro" id="IPR006702">
    <property type="entry name" value="CASP_dom"/>
</dbReference>
<dbReference type="InterPro" id="IPR045009">
    <property type="entry name" value="CASPL-5"/>
</dbReference>
<dbReference type="PANTHER" id="PTHR32021:SF1">
    <property type="entry name" value="CASP-LIKE PROTEIN 5A1"/>
    <property type="match status" value="1"/>
</dbReference>
<dbReference type="PANTHER" id="PTHR32021">
    <property type="entry name" value="CASP-LIKE PROTEIN 5B3"/>
    <property type="match status" value="1"/>
</dbReference>
<dbReference type="Pfam" id="PF04535">
    <property type="entry name" value="CASP_dom"/>
    <property type="match status" value="1"/>
</dbReference>